<sequence length="634" mass="71611">MTVETQKETLGFQTEVKQLLHLMIHSLYSNKEIFLRELISNASDAADKLRFEALAKPELFEGDADLKIRLSFDKDAGTVTLEDNGIGMSREDVIAHLGTIAKSGTADFMKNLTGDQKKDSHLIGQFGVGFYSAFIVADKVDVYSRRAGQPAAEGVHWSSKGEGEFEVATIDKPQRGTRIVLHLKKDEQEFADGWRLRNVVKKYSDHIALPIQLPKEQAATEGEEQPAEEWETVNRASALWTRSRTEVKDEEYQEFYKHIGHDFENPLAWSHNKVEGKLEYNSLLYVPARAPFDLYQREAPRGLKLYVQRVFIMDQAESFLPLYLRFIKGVVDSNDLSLNVSREILQKDPIIDSMKTALTKRVLDMLEKLAKNEPEKYKGFWKNFGQVLKEGPAEDFANKEKIAGLLRFASTQDDSGEQSVALADYLARAKEGQDKIYYLTGESYAQVKNSPHLEVFRKKGIEVLLLTDRIDEWLMSYLNEFDGKAFVDIARGDLDLGKLDSEEDKKAQEEVAKDKEGLVERLKGALGDSVAEVRVSHRLTDSPAILAIGEQDLGLQMRQILEASGQKVPESKPIFEFNPSHPLIEKLDHEQSEDRFAELSHILFDQAALAAGDSLKDPAAYVRRLNKLLVELSA</sequence>
<protein>
    <recommendedName>
        <fullName evidence="1">Chaperone protein HtpG</fullName>
    </recommendedName>
    <alternativeName>
        <fullName evidence="1">Heat shock protein HtpG</fullName>
    </alternativeName>
    <alternativeName>
        <fullName evidence="1">High temperature protein G</fullName>
    </alternativeName>
</protein>
<evidence type="ECO:0000255" key="1">
    <source>
        <dbReference type="HAMAP-Rule" id="MF_00505"/>
    </source>
</evidence>
<dbReference type="EMBL" id="AE015451">
    <property type="protein sequence ID" value="AAN69760.1"/>
    <property type="molecule type" value="Genomic_DNA"/>
</dbReference>
<dbReference type="RefSeq" id="NP_746296.1">
    <property type="nucleotide sequence ID" value="NC_002947.4"/>
</dbReference>
<dbReference type="RefSeq" id="WP_010954944.1">
    <property type="nucleotide sequence ID" value="NZ_CP169744.1"/>
</dbReference>
<dbReference type="SMR" id="Q88FB9"/>
<dbReference type="STRING" id="160488.PP_4179"/>
<dbReference type="PaxDb" id="160488-PP_4179"/>
<dbReference type="GeneID" id="83679132"/>
<dbReference type="KEGG" id="ppu:PP_4179"/>
<dbReference type="PATRIC" id="fig|160488.4.peg.4441"/>
<dbReference type="eggNOG" id="COG0326">
    <property type="taxonomic scope" value="Bacteria"/>
</dbReference>
<dbReference type="HOGENOM" id="CLU_006684_3_0_6"/>
<dbReference type="OrthoDB" id="9802640at2"/>
<dbReference type="PhylomeDB" id="Q88FB9"/>
<dbReference type="BioCyc" id="PPUT160488:G1G01-4445-MONOMER"/>
<dbReference type="Proteomes" id="UP000000556">
    <property type="component" value="Chromosome"/>
</dbReference>
<dbReference type="GO" id="GO:0005737">
    <property type="term" value="C:cytoplasm"/>
    <property type="evidence" value="ECO:0007669"/>
    <property type="project" value="UniProtKB-SubCell"/>
</dbReference>
<dbReference type="GO" id="GO:0005524">
    <property type="term" value="F:ATP binding"/>
    <property type="evidence" value="ECO:0007669"/>
    <property type="project" value="UniProtKB-UniRule"/>
</dbReference>
<dbReference type="GO" id="GO:0016887">
    <property type="term" value="F:ATP hydrolysis activity"/>
    <property type="evidence" value="ECO:0007669"/>
    <property type="project" value="InterPro"/>
</dbReference>
<dbReference type="GO" id="GO:0140662">
    <property type="term" value="F:ATP-dependent protein folding chaperone"/>
    <property type="evidence" value="ECO:0007669"/>
    <property type="project" value="InterPro"/>
</dbReference>
<dbReference type="GO" id="GO:0051082">
    <property type="term" value="F:unfolded protein binding"/>
    <property type="evidence" value="ECO:0007669"/>
    <property type="project" value="UniProtKB-UniRule"/>
</dbReference>
<dbReference type="CDD" id="cd16927">
    <property type="entry name" value="HATPase_Hsp90-like"/>
    <property type="match status" value="1"/>
</dbReference>
<dbReference type="FunFam" id="3.30.230.80:FF:000002">
    <property type="entry name" value="Molecular chaperone HtpG"/>
    <property type="match status" value="1"/>
</dbReference>
<dbReference type="FunFam" id="3.30.565.10:FF:000009">
    <property type="entry name" value="Molecular chaperone HtpG"/>
    <property type="match status" value="1"/>
</dbReference>
<dbReference type="Gene3D" id="3.30.230.80">
    <property type="match status" value="1"/>
</dbReference>
<dbReference type="Gene3D" id="3.40.50.11260">
    <property type="match status" value="1"/>
</dbReference>
<dbReference type="Gene3D" id="1.20.120.790">
    <property type="entry name" value="Heat shock protein 90, C-terminal domain"/>
    <property type="match status" value="1"/>
</dbReference>
<dbReference type="Gene3D" id="3.30.565.10">
    <property type="entry name" value="Histidine kinase-like ATPase, C-terminal domain"/>
    <property type="match status" value="1"/>
</dbReference>
<dbReference type="HAMAP" id="MF_00505">
    <property type="entry name" value="HSP90"/>
    <property type="match status" value="1"/>
</dbReference>
<dbReference type="InterPro" id="IPR036890">
    <property type="entry name" value="HATPase_C_sf"/>
</dbReference>
<dbReference type="InterPro" id="IPR019805">
    <property type="entry name" value="Heat_shock_protein_90_CS"/>
</dbReference>
<dbReference type="InterPro" id="IPR037196">
    <property type="entry name" value="HSP90_C"/>
</dbReference>
<dbReference type="InterPro" id="IPR001404">
    <property type="entry name" value="Hsp90_fam"/>
</dbReference>
<dbReference type="InterPro" id="IPR020575">
    <property type="entry name" value="Hsp90_N"/>
</dbReference>
<dbReference type="InterPro" id="IPR020568">
    <property type="entry name" value="Ribosomal_Su5_D2-typ_SF"/>
</dbReference>
<dbReference type="NCBIfam" id="NF003555">
    <property type="entry name" value="PRK05218.1"/>
    <property type="match status" value="1"/>
</dbReference>
<dbReference type="PANTHER" id="PTHR11528">
    <property type="entry name" value="HEAT SHOCK PROTEIN 90 FAMILY MEMBER"/>
    <property type="match status" value="1"/>
</dbReference>
<dbReference type="Pfam" id="PF13589">
    <property type="entry name" value="HATPase_c_3"/>
    <property type="match status" value="1"/>
</dbReference>
<dbReference type="Pfam" id="PF00183">
    <property type="entry name" value="HSP90"/>
    <property type="match status" value="1"/>
</dbReference>
<dbReference type="PIRSF" id="PIRSF002583">
    <property type="entry name" value="Hsp90"/>
    <property type="match status" value="1"/>
</dbReference>
<dbReference type="PRINTS" id="PR00775">
    <property type="entry name" value="HEATSHOCK90"/>
</dbReference>
<dbReference type="SMART" id="SM00387">
    <property type="entry name" value="HATPase_c"/>
    <property type="match status" value="1"/>
</dbReference>
<dbReference type="SUPFAM" id="SSF55874">
    <property type="entry name" value="ATPase domain of HSP90 chaperone/DNA topoisomerase II/histidine kinase"/>
    <property type="match status" value="1"/>
</dbReference>
<dbReference type="SUPFAM" id="SSF110942">
    <property type="entry name" value="HSP90 C-terminal domain"/>
    <property type="match status" value="1"/>
</dbReference>
<dbReference type="SUPFAM" id="SSF54211">
    <property type="entry name" value="Ribosomal protein S5 domain 2-like"/>
    <property type="match status" value="1"/>
</dbReference>
<dbReference type="PROSITE" id="PS00298">
    <property type="entry name" value="HSP90"/>
    <property type="match status" value="1"/>
</dbReference>
<gene>
    <name evidence="1" type="primary">htpG</name>
    <name type="ordered locus">PP_4179</name>
</gene>
<keyword id="KW-0067">ATP-binding</keyword>
<keyword id="KW-0143">Chaperone</keyword>
<keyword id="KW-0963">Cytoplasm</keyword>
<keyword id="KW-0547">Nucleotide-binding</keyword>
<keyword id="KW-1185">Reference proteome</keyword>
<keyword id="KW-0346">Stress response</keyword>
<organism>
    <name type="scientific">Pseudomonas putida (strain ATCC 47054 / DSM 6125 / CFBP 8728 / NCIMB 11950 / KT2440)</name>
    <dbReference type="NCBI Taxonomy" id="160488"/>
    <lineage>
        <taxon>Bacteria</taxon>
        <taxon>Pseudomonadati</taxon>
        <taxon>Pseudomonadota</taxon>
        <taxon>Gammaproteobacteria</taxon>
        <taxon>Pseudomonadales</taxon>
        <taxon>Pseudomonadaceae</taxon>
        <taxon>Pseudomonas</taxon>
    </lineage>
</organism>
<reference key="1">
    <citation type="journal article" date="2002" name="Environ. Microbiol.">
        <title>Complete genome sequence and comparative analysis of the metabolically versatile Pseudomonas putida KT2440.</title>
        <authorList>
            <person name="Nelson K.E."/>
            <person name="Weinel C."/>
            <person name="Paulsen I.T."/>
            <person name="Dodson R.J."/>
            <person name="Hilbert H."/>
            <person name="Martins dos Santos V.A.P."/>
            <person name="Fouts D.E."/>
            <person name="Gill S.R."/>
            <person name="Pop M."/>
            <person name="Holmes M."/>
            <person name="Brinkac L.M."/>
            <person name="Beanan M.J."/>
            <person name="DeBoy R.T."/>
            <person name="Daugherty S.C."/>
            <person name="Kolonay J.F."/>
            <person name="Madupu R."/>
            <person name="Nelson W.C."/>
            <person name="White O."/>
            <person name="Peterson J.D."/>
            <person name="Khouri H.M."/>
            <person name="Hance I."/>
            <person name="Chris Lee P."/>
            <person name="Holtzapple E.K."/>
            <person name="Scanlan D."/>
            <person name="Tran K."/>
            <person name="Moazzez A."/>
            <person name="Utterback T.R."/>
            <person name="Rizzo M."/>
            <person name="Lee K."/>
            <person name="Kosack D."/>
            <person name="Moestl D."/>
            <person name="Wedler H."/>
            <person name="Lauber J."/>
            <person name="Stjepandic D."/>
            <person name="Hoheisel J."/>
            <person name="Straetz M."/>
            <person name="Heim S."/>
            <person name="Kiewitz C."/>
            <person name="Eisen J.A."/>
            <person name="Timmis K.N."/>
            <person name="Duesterhoeft A."/>
            <person name="Tuemmler B."/>
            <person name="Fraser C.M."/>
        </authorList>
    </citation>
    <scope>NUCLEOTIDE SEQUENCE [LARGE SCALE GENOMIC DNA]</scope>
    <source>
        <strain>ATCC 47054 / DSM 6125 / CFBP 8728 / NCIMB 11950 / KT2440</strain>
    </source>
</reference>
<feature type="chain" id="PRO_0000063004" description="Chaperone protein HtpG">
    <location>
        <begin position="1"/>
        <end position="634"/>
    </location>
</feature>
<feature type="region of interest" description="A; substrate-binding" evidence="1">
    <location>
        <begin position="1"/>
        <end position="342"/>
    </location>
</feature>
<feature type="region of interest" description="B" evidence="1">
    <location>
        <begin position="343"/>
        <end position="559"/>
    </location>
</feature>
<feature type="region of interest" description="C" evidence="1">
    <location>
        <begin position="560"/>
        <end position="634"/>
    </location>
</feature>
<comment type="function">
    <text evidence="1">Molecular chaperone. Has ATPase activity.</text>
</comment>
<comment type="subunit">
    <text evidence="1">Homodimer.</text>
</comment>
<comment type="subcellular location">
    <subcellularLocation>
        <location evidence="1">Cytoplasm</location>
    </subcellularLocation>
</comment>
<comment type="similarity">
    <text evidence="1">Belongs to the heat shock protein 90 family.</text>
</comment>
<name>HTPG_PSEPK</name>
<proteinExistence type="inferred from homology"/>
<accession>Q88FB9</accession>